<name>MURA_ORITI</name>
<dbReference type="EC" id="2.5.1.7" evidence="1"/>
<dbReference type="EMBL" id="AP008981">
    <property type="protein sequence ID" value="BAG40364.1"/>
    <property type="molecule type" value="Genomic_DNA"/>
</dbReference>
<dbReference type="RefSeq" id="WP_012461493.1">
    <property type="nucleotide sequence ID" value="NC_010793.1"/>
</dbReference>
<dbReference type="SMR" id="B3CSG3"/>
<dbReference type="KEGG" id="ott:OTT_0906"/>
<dbReference type="HOGENOM" id="CLU_027387_0_0_5"/>
<dbReference type="OrthoDB" id="9803760at2"/>
<dbReference type="UniPathway" id="UPA00219"/>
<dbReference type="Proteomes" id="UP000001033">
    <property type="component" value="Chromosome"/>
</dbReference>
<dbReference type="GO" id="GO:0005737">
    <property type="term" value="C:cytoplasm"/>
    <property type="evidence" value="ECO:0007669"/>
    <property type="project" value="UniProtKB-SubCell"/>
</dbReference>
<dbReference type="GO" id="GO:0008760">
    <property type="term" value="F:UDP-N-acetylglucosamine 1-carboxyvinyltransferase activity"/>
    <property type="evidence" value="ECO:0007669"/>
    <property type="project" value="UniProtKB-UniRule"/>
</dbReference>
<dbReference type="GO" id="GO:0051301">
    <property type="term" value="P:cell division"/>
    <property type="evidence" value="ECO:0007669"/>
    <property type="project" value="UniProtKB-KW"/>
</dbReference>
<dbReference type="GO" id="GO:0071555">
    <property type="term" value="P:cell wall organization"/>
    <property type="evidence" value="ECO:0007669"/>
    <property type="project" value="UniProtKB-KW"/>
</dbReference>
<dbReference type="GO" id="GO:0009252">
    <property type="term" value="P:peptidoglycan biosynthetic process"/>
    <property type="evidence" value="ECO:0007669"/>
    <property type="project" value="UniProtKB-UniRule"/>
</dbReference>
<dbReference type="GO" id="GO:0008360">
    <property type="term" value="P:regulation of cell shape"/>
    <property type="evidence" value="ECO:0007669"/>
    <property type="project" value="UniProtKB-KW"/>
</dbReference>
<dbReference type="GO" id="GO:0019277">
    <property type="term" value="P:UDP-N-acetylgalactosamine biosynthetic process"/>
    <property type="evidence" value="ECO:0007669"/>
    <property type="project" value="InterPro"/>
</dbReference>
<dbReference type="CDD" id="cd01555">
    <property type="entry name" value="UdpNAET"/>
    <property type="match status" value="1"/>
</dbReference>
<dbReference type="Gene3D" id="3.65.10.10">
    <property type="entry name" value="Enolpyruvate transferase domain"/>
    <property type="match status" value="2"/>
</dbReference>
<dbReference type="HAMAP" id="MF_00111">
    <property type="entry name" value="MurA"/>
    <property type="match status" value="1"/>
</dbReference>
<dbReference type="InterPro" id="IPR001986">
    <property type="entry name" value="Enolpyruvate_Tfrase_dom"/>
</dbReference>
<dbReference type="InterPro" id="IPR036968">
    <property type="entry name" value="Enolpyruvate_Tfrase_sf"/>
</dbReference>
<dbReference type="InterPro" id="IPR050068">
    <property type="entry name" value="MurA_subfamily"/>
</dbReference>
<dbReference type="InterPro" id="IPR013792">
    <property type="entry name" value="RNA3'P_cycl/enolpyr_Trfase_a/b"/>
</dbReference>
<dbReference type="InterPro" id="IPR005750">
    <property type="entry name" value="UDP_GlcNAc_COvinyl_MurA"/>
</dbReference>
<dbReference type="NCBIfam" id="TIGR01072">
    <property type="entry name" value="murA"/>
    <property type="match status" value="1"/>
</dbReference>
<dbReference type="NCBIfam" id="NF006873">
    <property type="entry name" value="PRK09369.1"/>
    <property type="match status" value="1"/>
</dbReference>
<dbReference type="PANTHER" id="PTHR43783">
    <property type="entry name" value="UDP-N-ACETYLGLUCOSAMINE 1-CARBOXYVINYLTRANSFERASE"/>
    <property type="match status" value="1"/>
</dbReference>
<dbReference type="PANTHER" id="PTHR43783:SF1">
    <property type="entry name" value="UDP-N-ACETYLGLUCOSAMINE 1-CARBOXYVINYLTRANSFERASE"/>
    <property type="match status" value="1"/>
</dbReference>
<dbReference type="Pfam" id="PF00275">
    <property type="entry name" value="EPSP_synthase"/>
    <property type="match status" value="1"/>
</dbReference>
<dbReference type="SUPFAM" id="SSF55205">
    <property type="entry name" value="EPT/RTPC-like"/>
    <property type="match status" value="1"/>
</dbReference>
<comment type="function">
    <text evidence="1">Cell wall formation. Adds enolpyruvyl to UDP-N-acetylglucosamine.</text>
</comment>
<comment type="catalytic activity">
    <reaction evidence="1">
        <text>phosphoenolpyruvate + UDP-N-acetyl-alpha-D-glucosamine = UDP-N-acetyl-3-O-(1-carboxyvinyl)-alpha-D-glucosamine + phosphate</text>
        <dbReference type="Rhea" id="RHEA:18681"/>
        <dbReference type="ChEBI" id="CHEBI:43474"/>
        <dbReference type="ChEBI" id="CHEBI:57705"/>
        <dbReference type="ChEBI" id="CHEBI:58702"/>
        <dbReference type="ChEBI" id="CHEBI:68483"/>
        <dbReference type="EC" id="2.5.1.7"/>
    </reaction>
</comment>
<comment type="pathway">
    <text evidence="1">Cell wall biogenesis; peptidoglycan biosynthesis.</text>
</comment>
<comment type="subcellular location">
    <subcellularLocation>
        <location evidence="1">Cytoplasm</location>
    </subcellularLocation>
</comment>
<comment type="similarity">
    <text evidence="1">Belongs to the EPSP synthase family. MurA subfamily.</text>
</comment>
<sequence>MSSILVEGGKSLRGEINISGAKNAALPIIVASLLSSKTLVINNVPQLSDVSDMLFILKSCGVHVEIVESGTIALTANNISCHFSPPCNIVKKMRASIWILAPLLLRLGQVRIALPGGCAIGQRRIDLHLAALKAFGANIQLEEDYISANCSSRMHGISFKFDKVSVGATITAIMCAVLANGSTKLANCAQEPEIADLCYCLRKMGANITGIGTANISIIGVKELNGANYSIIPDRIEAGTYMVAAAITQGKIKLNNVIFKHLKSAITKLRLSGAIIQYQNENSLIIEGANIIKPLNIQTNPYPNFPTDLQAQFMSLMSIADGVSIITENIYENRYMHVFELIKMGANIVIQSREAIVTGVKKLHGADVIATDLRASVSLVLAGLSAAGITRVKRMHHLDRGYESLVEKLQNCNARVQRIPD</sequence>
<organism>
    <name type="scientific">Orientia tsutsugamushi (strain Ikeda)</name>
    <name type="common">Rickettsia tsutsugamushi</name>
    <dbReference type="NCBI Taxonomy" id="334380"/>
    <lineage>
        <taxon>Bacteria</taxon>
        <taxon>Pseudomonadati</taxon>
        <taxon>Pseudomonadota</taxon>
        <taxon>Alphaproteobacteria</taxon>
        <taxon>Rickettsiales</taxon>
        <taxon>Rickettsiaceae</taxon>
        <taxon>Rickettsieae</taxon>
        <taxon>Orientia</taxon>
    </lineage>
</organism>
<feature type="chain" id="PRO_1000094706" description="UDP-N-acetylglucosamine 1-carboxyvinyltransferase">
    <location>
        <begin position="1"/>
        <end position="421"/>
    </location>
</feature>
<feature type="active site" description="Proton donor" evidence="1">
    <location>
        <position position="118"/>
    </location>
</feature>
<feature type="binding site" evidence="1">
    <location>
        <begin position="22"/>
        <end position="23"/>
    </location>
    <ligand>
        <name>phosphoenolpyruvate</name>
        <dbReference type="ChEBI" id="CHEBI:58702"/>
    </ligand>
</feature>
<feature type="binding site" evidence="1">
    <location>
        <position position="94"/>
    </location>
    <ligand>
        <name>UDP-N-acetyl-alpha-D-glucosamine</name>
        <dbReference type="ChEBI" id="CHEBI:57705"/>
    </ligand>
</feature>
<feature type="binding site" evidence="1">
    <location>
        <begin position="163"/>
        <end position="166"/>
    </location>
    <ligand>
        <name>UDP-N-acetyl-alpha-D-glucosamine</name>
        <dbReference type="ChEBI" id="CHEBI:57705"/>
    </ligand>
</feature>
<feature type="binding site" evidence="1">
    <location>
        <position position="308"/>
    </location>
    <ligand>
        <name>UDP-N-acetyl-alpha-D-glucosamine</name>
        <dbReference type="ChEBI" id="CHEBI:57705"/>
    </ligand>
</feature>
<feature type="binding site" evidence="1">
    <location>
        <position position="330"/>
    </location>
    <ligand>
        <name>UDP-N-acetyl-alpha-D-glucosamine</name>
        <dbReference type="ChEBI" id="CHEBI:57705"/>
    </ligand>
</feature>
<feature type="modified residue" description="2-(S-cysteinyl)pyruvic acid O-phosphothioketal" evidence="1">
    <location>
        <position position="118"/>
    </location>
</feature>
<proteinExistence type="inferred from homology"/>
<evidence type="ECO:0000255" key="1">
    <source>
        <dbReference type="HAMAP-Rule" id="MF_00111"/>
    </source>
</evidence>
<accession>B3CSG3</accession>
<gene>
    <name evidence="1" type="primary">murA</name>
    <name type="ordered locus">OTT_0906</name>
</gene>
<protein>
    <recommendedName>
        <fullName evidence="1">UDP-N-acetylglucosamine 1-carboxyvinyltransferase</fullName>
        <ecNumber evidence="1">2.5.1.7</ecNumber>
    </recommendedName>
    <alternativeName>
        <fullName evidence="1">Enoylpyruvate transferase</fullName>
    </alternativeName>
    <alternativeName>
        <fullName evidence="1">UDP-N-acetylglucosamine enolpyruvyl transferase</fullName>
        <shortName evidence="1">EPT</shortName>
    </alternativeName>
</protein>
<reference key="1">
    <citation type="journal article" date="2008" name="DNA Res.">
        <title>The whole-genome sequencing of the obligate intracellular bacterium Orientia tsutsugamushi revealed massive gene amplification during reductive genome evolution.</title>
        <authorList>
            <person name="Nakayama K."/>
            <person name="Yamashita A."/>
            <person name="Kurokawa K."/>
            <person name="Morimoto T."/>
            <person name="Ogawa M."/>
            <person name="Fukuhara M."/>
            <person name="Urakami H."/>
            <person name="Ohnishi M."/>
            <person name="Uchiyama I."/>
            <person name="Ogura Y."/>
            <person name="Ooka T."/>
            <person name="Oshima K."/>
            <person name="Tamura A."/>
            <person name="Hattori M."/>
            <person name="Hayashi T."/>
        </authorList>
    </citation>
    <scope>NUCLEOTIDE SEQUENCE [LARGE SCALE GENOMIC DNA]</scope>
    <source>
        <strain>Ikeda</strain>
    </source>
</reference>
<keyword id="KW-0131">Cell cycle</keyword>
<keyword id="KW-0132">Cell division</keyword>
<keyword id="KW-0133">Cell shape</keyword>
<keyword id="KW-0961">Cell wall biogenesis/degradation</keyword>
<keyword id="KW-0963">Cytoplasm</keyword>
<keyword id="KW-0573">Peptidoglycan synthesis</keyword>
<keyword id="KW-0670">Pyruvate</keyword>
<keyword id="KW-0808">Transferase</keyword>